<organism>
    <name type="scientific">Mus musculus</name>
    <name type="common">Mouse</name>
    <dbReference type="NCBI Taxonomy" id="10090"/>
    <lineage>
        <taxon>Eukaryota</taxon>
        <taxon>Metazoa</taxon>
        <taxon>Chordata</taxon>
        <taxon>Craniata</taxon>
        <taxon>Vertebrata</taxon>
        <taxon>Euteleostomi</taxon>
        <taxon>Mammalia</taxon>
        <taxon>Eutheria</taxon>
        <taxon>Euarchontoglires</taxon>
        <taxon>Glires</taxon>
        <taxon>Rodentia</taxon>
        <taxon>Myomorpha</taxon>
        <taxon>Muroidea</taxon>
        <taxon>Muridae</taxon>
        <taxon>Murinae</taxon>
        <taxon>Mus</taxon>
        <taxon>Mus</taxon>
    </lineage>
</organism>
<dbReference type="EMBL" id="AK138606">
    <property type="protein sequence ID" value="BAE23714.1"/>
    <property type="molecule type" value="mRNA"/>
</dbReference>
<dbReference type="EMBL" id="BC052056">
    <property type="protein sequence ID" value="AAH52056.1"/>
    <property type="molecule type" value="mRNA"/>
</dbReference>
<dbReference type="EMBL" id="BC062962">
    <property type="protein sequence ID" value="AAH62962.1"/>
    <property type="molecule type" value="mRNA"/>
</dbReference>
<dbReference type="EMBL" id="U69137">
    <property type="protein sequence ID" value="AAB87708.1"/>
    <property type="molecule type" value="mRNA"/>
</dbReference>
<dbReference type="CCDS" id="CCDS37047.1"/>
<dbReference type="RefSeq" id="NP_001303687.1">
    <property type="nucleotide sequence ID" value="NM_001316758.1"/>
</dbReference>
<dbReference type="RefSeq" id="NP_033995.1">
    <property type="nucleotide sequence ID" value="NM_009865.3"/>
</dbReference>
<dbReference type="PDB" id="6CG6">
    <property type="method" value="X-ray"/>
    <property type="resolution" value="2.71 A"/>
    <property type="chains" value="A=55-261"/>
</dbReference>
<dbReference type="PDBsum" id="6CG6"/>
<dbReference type="SMR" id="P70408"/>
<dbReference type="BioGRID" id="236359">
    <property type="interactions" value="5"/>
</dbReference>
<dbReference type="FunCoup" id="P70408">
    <property type="interactions" value="337"/>
</dbReference>
<dbReference type="IntAct" id="P70408">
    <property type="interactions" value="4"/>
</dbReference>
<dbReference type="MINT" id="P70408"/>
<dbReference type="STRING" id="10090.ENSMUSP00000042199"/>
<dbReference type="GlyConnect" id="2163">
    <property type="glycosylation" value="8 N-Linked glycans (2 sites)"/>
</dbReference>
<dbReference type="GlyCosmos" id="P70408">
    <property type="glycosylation" value="4 sites, 8 glycans"/>
</dbReference>
<dbReference type="GlyGen" id="P70408">
    <property type="glycosylation" value="4 sites, 12 N-linked glycans (4 sites)"/>
</dbReference>
<dbReference type="iPTMnet" id="P70408"/>
<dbReference type="PhosphoSitePlus" id="P70408"/>
<dbReference type="PaxDb" id="10090-ENSMUSP00000042199"/>
<dbReference type="PeptideAtlas" id="P70408"/>
<dbReference type="ProteomicsDB" id="265492"/>
<dbReference type="Antibodypedia" id="2223">
    <property type="antibodies" value="204 antibodies from 30 providers"/>
</dbReference>
<dbReference type="Ensembl" id="ENSMUST00000040562.14">
    <property type="protein sequence ID" value="ENSMUSP00000042199.8"/>
    <property type="gene ID" value="ENSMUSG00000022321.16"/>
</dbReference>
<dbReference type="Ensembl" id="ENSMUST00000166873.9">
    <property type="protein sequence ID" value="ENSMUSP00000128782.3"/>
    <property type="gene ID" value="ENSMUSG00000022321.16"/>
</dbReference>
<dbReference type="GeneID" id="320873"/>
<dbReference type="KEGG" id="mmu:320873"/>
<dbReference type="UCSC" id="uc007vik.1">
    <property type="organism name" value="mouse"/>
</dbReference>
<dbReference type="AGR" id="MGI:107436"/>
<dbReference type="CTD" id="1008"/>
<dbReference type="MGI" id="MGI:107436">
    <property type="gene designation" value="Cdh10"/>
</dbReference>
<dbReference type="VEuPathDB" id="HostDB:ENSMUSG00000022321"/>
<dbReference type="eggNOG" id="KOG3594">
    <property type="taxonomic scope" value="Eukaryota"/>
</dbReference>
<dbReference type="GeneTree" id="ENSGT00940000154187"/>
<dbReference type="HOGENOM" id="CLU_005284_3_1_1"/>
<dbReference type="InParanoid" id="P70408"/>
<dbReference type="OMA" id="CSPEITF"/>
<dbReference type="OrthoDB" id="6252479at2759"/>
<dbReference type="PhylomeDB" id="P70408"/>
<dbReference type="TreeFam" id="TF329887"/>
<dbReference type="Reactome" id="R-MMU-418990">
    <property type="pathway name" value="Adherens junctions interactions"/>
</dbReference>
<dbReference type="BioGRID-ORCS" id="320873">
    <property type="hits" value="3 hits in 77 CRISPR screens"/>
</dbReference>
<dbReference type="CD-CODE" id="CE726F99">
    <property type="entry name" value="Postsynaptic density"/>
</dbReference>
<dbReference type="PRO" id="PR:P70408"/>
<dbReference type="Proteomes" id="UP000000589">
    <property type="component" value="Chromosome 15"/>
</dbReference>
<dbReference type="RNAct" id="P70408">
    <property type="molecule type" value="protein"/>
</dbReference>
<dbReference type="Bgee" id="ENSMUSG00000022321">
    <property type="expression patterns" value="Expressed in cortical subplate and 146 other cell types or tissues"/>
</dbReference>
<dbReference type="ExpressionAtlas" id="P70408">
    <property type="expression patterns" value="baseline and differential"/>
</dbReference>
<dbReference type="GO" id="GO:0098982">
    <property type="term" value="C:GABA-ergic synapse"/>
    <property type="evidence" value="ECO:0007669"/>
    <property type="project" value="Ensembl"/>
</dbReference>
<dbReference type="GO" id="GO:0098978">
    <property type="term" value="C:glutamatergic synapse"/>
    <property type="evidence" value="ECO:0000314"/>
    <property type="project" value="SynGO"/>
</dbReference>
<dbReference type="GO" id="GO:0099634">
    <property type="term" value="C:postsynaptic specialization membrane"/>
    <property type="evidence" value="ECO:0007669"/>
    <property type="project" value="Ensembl"/>
</dbReference>
<dbReference type="GO" id="GO:0048787">
    <property type="term" value="C:presynaptic active zone membrane"/>
    <property type="evidence" value="ECO:0007669"/>
    <property type="project" value="Ensembl"/>
</dbReference>
<dbReference type="GO" id="GO:0045202">
    <property type="term" value="C:synapse"/>
    <property type="evidence" value="ECO:0000314"/>
    <property type="project" value="SynGO"/>
</dbReference>
<dbReference type="GO" id="GO:0005509">
    <property type="term" value="F:calcium ion binding"/>
    <property type="evidence" value="ECO:0007669"/>
    <property type="project" value="InterPro"/>
</dbReference>
<dbReference type="GO" id="GO:0007156">
    <property type="term" value="P:homophilic cell adhesion via plasma membrane adhesion molecules"/>
    <property type="evidence" value="ECO:0007669"/>
    <property type="project" value="InterPro"/>
</dbReference>
<dbReference type="GO" id="GO:0099560">
    <property type="term" value="P:synaptic membrane adhesion"/>
    <property type="evidence" value="ECO:0000314"/>
    <property type="project" value="SynGO"/>
</dbReference>
<dbReference type="CDD" id="cd11304">
    <property type="entry name" value="Cadherin_repeat"/>
    <property type="match status" value="5"/>
</dbReference>
<dbReference type="FunFam" id="2.60.40.60:FF:000008">
    <property type="entry name" value="Cadherin 24"/>
    <property type="match status" value="1"/>
</dbReference>
<dbReference type="FunFam" id="2.60.40.60:FF:000009">
    <property type="entry name" value="Cadherin 24"/>
    <property type="match status" value="1"/>
</dbReference>
<dbReference type="FunFam" id="2.60.40.60:FF:000012">
    <property type="entry name" value="Cadherin 24"/>
    <property type="match status" value="1"/>
</dbReference>
<dbReference type="FunFam" id="2.60.40.60:FF:000017">
    <property type="entry name" value="Cadherin 24"/>
    <property type="match status" value="1"/>
</dbReference>
<dbReference type="FunFam" id="2.60.40.60:FF:000014">
    <property type="entry name" value="Cadherin 8"/>
    <property type="match status" value="1"/>
</dbReference>
<dbReference type="FunFam" id="4.10.900.10:FF:000006">
    <property type="entry name" value="Cadherin-9 preproprotein"/>
    <property type="match status" value="1"/>
</dbReference>
<dbReference type="Gene3D" id="2.60.40.60">
    <property type="entry name" value="Cadherins"/>
    <property type="match status" value="5"/>
</dbReference>
<dbReference type="Gene3D" id="4.10.900.10">
    <property type="entry name" value="TCF3-CBD (Catenin binding domain)"/>
    <property type="match status" value="1"/>
</dbReference>
<dbReference type="InterPro" id="IPR039808">
    <property type="entry name" value="Cadherin"/>
</dbReference>
<dbReference type="InterPro" id="IPR002126">
    <property type="entry name" value="Cadherin-like_dom"/>
</dbReference>
<dbReference type="InterPro" id="IPR015919">
    <property type="entry name" value="Cadherin-like_sf"/>
</dbReference>
<dbReference type="InterPro" id="IPR020894">
    <property type="entry name" value="Cadherin_CS"/>
</dbReference>
<dbReference type="InterPro" id="IPR000233">
    <property type="entry name" value="Cadherin_Y-type_LIR"/>
</dbReference>
<dbReference type="InterPro" id="IPR027397">
    <property type="entry name" value="Catenin-bd_sf"/>
</dbReference>
<dbReference type="PANTHER" id="PTHR24027:SF290">
    <property type="entry name" value="CADHERIN-10"/>
    <property type="match status" value="1"/>
</dbReference>
<dbReference type="PANTHER" id="PTHR24027">
    <property type="entry name" value="CADHERIN-23"/>
    <property type="match status" value="1"/>
</dbReference>
<dbReference type="Pfam" id="PF01049">
    <property type="entry name" value="CADH_Y-type_LIR"/>
    <property type="match status" value="1"/>
</dbReference>
<dbReference type="Pfam" id="PF00028">
    <property type="entry name" value="Cadherin"/>
    <property type="match status" value="5"/>
</dbReference>
<dbReference type="PRINTS" id="PR00205">
    <property type="entry name" value="CADHERIN"/>
</dbReference>
<dbReference type="SMART" id="SM00112">
    <property type="entry name" value="CA"/>
    <property type="match status" value="5"/>
</dbReference>
<dbReference type="SUPFAM" id="SSF49313">
    <property type="entry name" value="Cadherin-like"/>
    <property type="match status" value="5"/>
</dbReference>
<dbReference type="PROSITE" id="PS00232">
    <property type="entry name" value="CADHERIN_1"/>
    <property type="match status" value="3"/>
</dbReference>
<dbReference type="PROSITE" id="PS50268">
    <property type="entry name" value="CADHERIN_2"/>
    <property type="match status" value="5"/>
</dbReference>
<keyword id="KW-0002">3D-structure</keyword>
<keyword id="KW-0106">Calcium</keyword>
<keyword id="KW-0130">Cell adhesion</keyword>
<keyword id="KW-1003">Cell membrane</keyword>
<keyword id="KW-0165">Cleavage on pair of basic residues</keyword>
<keyword id="KW-0325">Glycoprotein</keyword>
<keyword id="KW-0472">Membrane</keyword>
<keyword id="KW-0479">Metal-binding</keyword>
<keyword id="KW-0597">Phosphoprotein</keyword>
<keyword id="KW-1185">Reference proteome</keyword>
<keyword id="KW-0677">Repeat</keyword>
<keyword id="KW-0732">Signal</keyword>
<keyword id="KW-0812">Transmembrane</keyword>
<keyword id="KW-1133">Transmembrane helix</keyword>
<feature type="signal peptide" evidence="2">
    <location>
        <begin position="1"/>
        <end position="22"/>
    </location>
</feature>
<feature type="propeptide" id="PRO_0000269662" evidence="2">
    <location>
        <begin position="23"/>
        <end position="54"/>
    </location>
</feature>
<feature type="chain" id="PRO_0000126646" description="Cadherin-10">
    <location>
        <begin position="55"/>
        <end position="788"/>
    </location>
</feature>
<feature type="topological domain" description="Extracellular" evidence="2">
    <location>
        <begin position="23"/>
        <end position="613"/>
    </location>
</feature>
<feature type="transmembrane region" description="Helical" evidence="2">
    <location>
        <begin position="614"/>
        <end position="634"/>
    </location>
</feature>
<feature type="topological domain" description="Cytoplasmic" evidence="2">
    <location>
        <begin position="635"/>
        <end position="788"/>
    </location>
</feature>
<feature type="domain" description="Cadherin 1" evidence="3">
    <location>
        <begin position="56"/>
        <end position="160"/>
    </location>
</feature>
<feature type="domain" description="Cadherin 2" evidence="3">
    <location>
        <begin position="161"/>
        <end position="269"/>
    </location>
</feature>
<feature type="domain" description="Cadherin 3" evidence="3">
    <location>
        <begin position="270"/>
        <end position="384"/>
    </location>
</feature>
<feature type="domain" description="Cadherin 4" evidence="3">
    <location>
        <begin position="385"/>
        <end position="489"/>
    </location>
</feature>
<feature type="domain" description="Cadherin 5" evidence="3">
    <location>
        <begin position="489"/>
        <end position="603"/>
    </location>
</feature>
<feature type="modified residue" description="Phosphoserine" evidence="6 7">
    <location>
        <position position="784"/>
    </location>
</feature>
<feature type="glycosylation site" description="N-linked (GlcNAc...) asparagine" evidence="2">
    <location>
        <position position="256"/>
    </location>
</feature>
<feature type="glycosylation site" description="N-linked (GlcNAc...) asparagine" evidence="2">
    <location>
        <position position="456"/>
    </location>
</feature>
<feature type="glycosylation site" description="N-linked (GlcNAc...) asparagine" evidence="2">
    <location>
        <position position="534"/>
    </location>
</feature>
<feature type="sequence conflict" description="In Ref. 2; AAH52056/AAH62962." evidence="5" ref="2">
    <original>P</original>
    <variation>S</variation>
    <location>
        <position position="142"/>
    </location>
</feature>
<feature type="sequence conflict" description="In Ref. 3; AAB87708." evidence="5" ref="3">
    <original>PLGGQKFF</original>
    <variation>VDRRSFS</variation>
    <location>
        <begin position="518"/>
        <end position="525"/>
    </location>
</feature>
<feature type="sequence conflict" description="In Ref. 3; AAB87708." evidence="5" ref="3">
    <original>T</original>
    <variation>A</variation>
    <location>
        <position position="549"/>
    </location>
</feature>
<feature type="sequence conflict" description="In Ref. 3; AAB87708." evidence="5" ref="3">
    <original>AGLS</original>
    <variation>WPH</variation>
    <location>
        <begin position="607"/>
        <end position="610"/>
    </location>
</feature>
<feature type="sequence conflict" description="In Ref. 3; AAB87708." evidence="5" ref="3">
    <location>
        <begin position="635"/>
        <end position="639"/>
    </location>
</feature>
<feature type="sequence conflict" description="In Ref. 3; AAB87708." evidence="5" ref="3">
    <location>
        <position position="699"/>
    </location>
</feature>
<feature type="sequence conflict" description="In Ref. 3; AAB87708." evidence="5" ref="3">
    <original>D</original>
    <variation>G</variation>
    <location>
        <position position="706"/>
    </location>
</feature>
<feature type="sequence conflict" description="In Ref. 3; AAB87708." evidence="5" ref="3">
    <original>N</original>
    <variation>K</variation>
    <location>
        <position position="773"/>
    </location>
</feature>
<feature type="sequence conflict" description="In Ref. 3; AAB87708." evidence="5" ref="3">
    <original>A</original>
    <variation>S</variation>
    <location>
        <position position="788"/>
    </location>
</feature>
<feature type="strand" evidence="8">
    <location>
        <begin position="60"/>
        <end position="66"/>
    </location>
</feature>
<feature type="strand" evidence="8">
    <location>
        <begin position="73"/>
        <end position="77"/>
    </location>
</feature>
<feature type="strand" evidence="8">
    <location>
        <begin position="85"/>
        <end position="87"/>
    </location>
</feature>
<feature type="strand" evidence="8">
    <location>
        <begin position="89"/>
        <end position="95"/>
    </location>
</feature>
<feature type="turn" evidence="8">
    <location>
        <begin position="99"/>
        <end position="101"/>
    </location>
</feature>
<feature type="strand" evidence="8">
    <location>
        <begin position="102"/>
        <end position="104"/>
    </location>
</feature>
<feature type="turn" evidence="8">
    <location>
        <begin position="106"/>
        <end position="108"/>
    </location>
</feature>
<feature type="strand" evidence="8">
    <location>
        <begin position="110"/>
        <end position="113"/>
    </location>
</feature>
<feature type="turn" evidence="8">
    <location>
        <begin position="119"/>
        <end position="121"/>
    </location>
</feature>
<feature type="strand" evidence="8">
    <location>
        <begin position="124"/>
        <end position="133"/>
    </location>
</feature>
<feature type="turn" evidence="8">
    <location>
        <begin position="134"/>
        <end position="136"/>
    </location>
</feature>
<feature type="strand" evidence="8">
    <location>
        <begin position="139"/>
        <end position="141"/>
    </location>
</feature>
<feature type="strand" evidence="8">
    <location>
        <begin position="144"/>
        <end position="151"/>
    </location>
</feature>
<feature type="strand" evidence="8">
    <location>
        <begin position="163"/>
        <end position="170"/>
    </location>
</feature>
<feature type="strand" evidence="8">
    <location>
        <begin position="178"/>
        <end position="181"/>
    </location>
</feature>
<feature type="strand" evidence="8">
    <location>
        <begin position="199"/>
        <end position="205"/>
    </location>
</feature>
<feature type="turn" evidence="8">
    <location>
        <begin position="206"/>
        <end position="208"/>
    </location>
</feature>
<feature type="strand" evidence="8">
    <location>
        <begin position="209"/>
        <end position="211"/>
    </location>
</feature>
<feature type="turn" evidence="8">
    <location>
        <begin position="213"/>
        <end position="215"/>
    </location>
</feature>
<feature type="strand" evidence="8">
    <location>
        <begin position="217"/>
        <end position="220"/>
    </location>
</feature>
<feature type="turn" evidence="8">
    <location>
        <begin position="227"/>
        <end position="229"/>
    </location>
</feature>
<feature type="strand" evidence="8">
    <location>
        <begin position="232"/>
        <end position="241"/>
    </location>
</feature>
<feature type="turn" evidence="8">
    <location>
        <begin position="242"/>
        <end position="244"/>
    </location>
</feature>
<feature type="strand" evidence="8">
    <location>
        <begin position="250"/>
        <end position="260"/>
    </location>
</feature>
<name>CAD10_MOUSE</name>
<sequence length="788" mass="88312">MTIYQFLRLFVLWACLPHFCCPELTFRRTPGIQQMTAESRAPRSDGKILHRQKRGWMWNQFFLLEEYTGSDYQYVGKLHSDQDKGDGSLKYILSGDGAGTLFIIDEKTGDIHATRRIDREEKAFYTLRAQAINRRTLRPVEPESEFVIKIHDINDNEPTFPEEIYTASVPEMSVVGTSVVQVTATDADDPSYGNSARVIYSILQGQPYFSVEPETGIIRTALPNMNRENKEQYQVVIQAKDMGGQMGGLSGTTTVNITLTDVNDNPPRFPQNTIHLRVLESSPVGTAVGSVKATDADTGKNAEVDYRIIDGDGTDMFDIITEKDTQEGIITVKKPLDYENRRLYTLKVEAENTHVDPRFYYLGPFKDTTIVKISIEDVDEPPVFSRSSYLFEVHEDIEVGTIIGTVMARDPDSTSSPIRFTLDRHTDLDRIFNIHSGNGSLYTSKPLDRELSQWHNLTVIAAEINNPKETTRVSVFVRILDVNDNAPQFAVFYDTFVCENARPGQLIQTISAVDKDDPLGGQKFFFSLAAVNPNFTVQDNEDNTARILTRKNGFNRHEISTYLLPVVISDNDYPIQSSTGTLTIRVCACDSQGNMQSCSAEALLLPAGLSTGALIAILLCIIILLVIVVLFAALKRQRKKEPLILSKEDIRDNIVSYNDEGGGEEDTQAFDIGTLRNPAAIEEKKLRRDIIPETLFIPRRTPTAPDNTDVRDFINERLKEHDLDPTAPPYDSLATYAYEGNDSVAESLSSLESGTTEGDQNYDYLREWGPRFNKLAEMYGGGESDKDA</sequence>
<proteinExistence type="evidence at protein level"/>
<gene>
    <name type="primary">Cdh10</name>
</gene>
<protein>
    <recommendedName>
        <fullName>Cadherin-10</fullName>
    </recommendedName>
    <alternativeName>
        <fullName>T2-cadherin</fullName>
    </alternativeName>
</protein>
<comment type="function">
    <text>Cadherins are calcium-dependent cell adhesion proteins. They preferentially interact with themselves in a homophilic manner in connecting cells; cadherins may thus contribute to the sorting of heterogeneous cell types.</text>
</comment>
<comment type="subcellular location">
    <subcellularLocation>
        <location evidence="5">Cell membrane</location>
        <topology evidence="5">Single-pass type I membrane protein</topology>
    </subcellularLocation>
</comment>
<comment type="developmental stage">
    <text evidence="4">Expressed at all stages of testicular development with highest levels found in fetal gonad.</text>
</comment>
<comment type="domain">
    <text evidence="1">Three calcium ions are usually bound at the interface of each cadherin domain and rigidify the connections, imparting a strong curvature to the full-length ectodomain.</text>
</comment>
<accession>P70408</accession>
<accession>Q3UUB3</accession>
<accession>Q80WS7</accession>
<reference key="1">
    <citation type="journal article" date="2005" name="Science">
        <title>The transcriptional landscape of the mammalian genome.</title>
        <authorList>
            <person name="Carninci P."/>
            <person name="Kasukawa T."/>
            <person name="Katayama S."/>
            <person name="Gough J."/>
            <person name="Frith M.C."/>
            <person name="Maeda N."/>
            <person name="Oyama R."/>
            <person name="Ravasi T."/>
            <person name="Lenhard B."/>
            <person name="Wells C."/>
            <person name="Kodzius R."/>
            <person name="Shimokawa K."/>
            <person name="Bajic V.B."/>
            <person name="Brenner S.E."/>
            <person name="Batalov S."/>
            <person name="Forrest A.R."/>
            <person name="Zavolan M."/>
            <person name="Davis M.J."/>
            <person name="Wilming L.G."/>
            <person name="Aidinis V."/>
            <person name="Allen J.E."/>
            <person name="Ambesi-Impiombato A."/>
            <person name="Apweiler R."/>
            <person name="Aturaliya R.N."/>
            <person name="Bailey T.L."/>
            <person name="Bansal M."/>
            <person name="Baxter L."/>
            <person name="Beisel K.W."/>
            <person name="Bersano T."/>
            <person name="Bono H."/>
            <person name="Chalk A.M."/>
            <person name="Chiu K.P."/>
            <person name="Choudhary V."/>
            <person name="Christoffels A."/>
            <person name="Clutterbuck D.R."/>
            <person name="Crowe M.L."/>
            <person name="Dalla E."/>
            <person name="Dalrymple B.P."/>
            <person name="de Bono B."/>
            <person name="Della Gatta G."/>
            <person name="di Bernardo D."/>
            <person name="Down T."/>
            <person name="Engstrom P."/>
            <person name="Fagiolini M."/>
            <person name="Faulkner G."/>
            <person name="Fletcher C.F."/>
            <person name="Fukushima T."/>
            <person name="Furuno M."/>
            <person name="Futaki S."/>
            <person name="Gariboldi M."/>
            <person name="Georgii-Hemming P."/>
            <person name="Gingeras T.R."/>
            <person name="Gojobori T."/>
            <person name="Green R.E."/>
            <person name="Gustincich S."/>
            <person name="Harbers M."/>
            <person name="Hayashi Y."/>
            <person name="Hensch T.K."/>
            <person name="Hirokawa N."/>
            <person name="Hill D."/>
            <person name="Huminiecki L."/>
            <person name="Iacono M."/>
            <person name="Ikeo K."/>
            <person name="Iwama A."/>
            <person name="Ishikawa T."/>
            <person name="Jakt M."/>
            <person name="Kanapin A."/>
            <person name="Katoh M."/>
            <person name="Kawasawa Y."/>
            <person name="Kelso J."/>
            <person name="Kitamura H."/>
            <person name="Kitano H."/>
            <person name="Kollias G."/>
            <person name="Krishnan S.P."/>
            <person name="Kruger A."/>
            <person name="Kummerfeld S.K."/>
            <person name="Kurochkin I.V."/>
            <person name="Lareau L.F."/>
            <person name="Lazarevic D."/>
            <person name="Lipovich L."/>
            <person name="Liu J."/>
            <person name="Liuni S."/>
            <person name="McWilliam S."/>
            <person name="Madan Babu M."/>
            <person name="Madera M."/>
            <person name="Marchionni L."/>
            <person name="Matsuda H."/>
            <person name="Matsuzawa S."/>
            <person name="Miki H."/>
            <person name="Mignone F."/>
            <person name="Miyake S."/>
            <person name="Morris K."/>
            <person name="Mottagui-Tabar S."/>
            <person name="Mulder N."/>
            <person name="Nakano N."/>
            <person name="Nakauchi H."/>
            <person name="Ng P."/>
            <person name="Nilsson R."/>
            <person name="Nishiguchi S."/>
            <person name="Nishikawa S."/>
            <person name="Nori F."/>
            <person name="Ohara O."/>
            <person name="Okazaki Y."/>
            <person name="Orlando V."/>
            <person name="Pang K.C."/>
            <person name="Pavan W.J."/>
            <person name="Pavesi G."/>
            <person name="Pesole G."/>
            <person name="Petrovsky N."/>
            <person name="Piazza S."/>
            <person name="Reed J."/>
            <person name="Reid J.F."/>
            <person name="Ring B.Z."/>
            <person name="Ringwald M."/>
            <person name="Rost B."/>
            <person name="Ruan Y."/>
            <person name="Salzberg S.L."/>
            <person name="Sandelin A."/>
            <person name="Schneider C."/>
            <person name="Schoenbach C."/>
            <person name="Sekiguchi K."/>
            <person name="Semple C.A."/>
            <person name="Seno S."/>
            <person name="Sessa L."/>
            <person name="Sheng Y."/>
            <person name="Shibata Y."/>
            <person name="Shimada H."/>
            <person name="Shimada K."/>
            <person name="Silva D."/>
            <person name="Sinclair B."/>
            <person name="Sperling S."/>
            <person name="Stupka E."/>
            <person name="Sugiura K."/>
            <person name="Sultana R."/>
            <person name="Takenaka Y."/>
            <person name="Taki K."/>
            <person name="Tammoja K."/>
            <person name="Tan S.L."/>
            <person name="Tang S."/>
            <person name="Taylor M.S."/>
            <person name="Tegner J."/>
            <person name="Teichmann S.A."/>
            <person name="Ueda H.R."/>
            <person name="van Nimwegen E."/>
            <person name="Verardo R."/>
            <person name="Wei C.L."/>
            <person name="Yagi K."/>
            <person name="Yamanishi H."/>
            <person name="Zabarovsky E."/>
            <person name="Zhu S."/>
            <person name="Zimmer A."/>
            <person name="Hide W."/>
            <person name="Bult C."/>
            <person name="Grimmond S.M."/>
            <person name="Teasdale R.D."/>
            <person name="Liu E.T."/>
            <person name="Brusic V."/>
            <person name="Quackenbush J."/>
            <person name="Wahlestedt C."/>
            <person name="Mattick J.S."/>
            <person name="Hume D.A."/>
            <person name="Kai C."/>
            <person name="Sasaki D."/>
            <person name="Tomaru Y."/>
            <person name="Fukuda S."/>
            <person name="Kanamori-Katayama M."/>
            <person name="Suzuki M."/>
            <person name="Aoki J."/>
            <person name="Arakawa T."/>
            <person name="Iida J."/>
            <person name="Imamura K."/>
            <person name="Itoh M."/>
            <person name="Kato T."/>
            <person name="Kawaji H."/>
            <person name="Kawagashira N."/>
            <person name="Kawashima T."/>
            <person name="Kojima M."/>
            <person name="Kondo S."/>
            <person name="Konno H."/>
            <person name="Nakano K."/>
            <person name="Ninomiya N."/>
            <person name="Nishio T."/>
            <person name="Okada M."/>
            <person name="Plessy C."/>
            <person name="Shibata K."/>
            <person name="Shiraki T."/>
            <person name="Suzuki S."/>
            <person name="Tagami M."/>
            <person name="Waki K."/>
            <person name="Watahiki A."/>
            <person name="Okamura-Oho Y."/>
            <person name="Suzuki H."/>
            <person name="Kawai J."/>
            <person name="Hayashizaki Y."/>
        </authorList>
    </citation>
    <scope>NUCLEOTIDE SEQUENCE [LARGE SCALE MRNA]</scope>
    <source>
        <strain>C57BL/6J</strain>
        <tissue>Spinal cord</tissue>
    </source>
</reference>
<reference key="2">
    <citation type="journal article" date="2004" name="Genome Res.">
        <title>The status, quality, and expansion of the NIH full-length cDNA project: the Mammalian Gene Collection (MGC).</title>
        <authorList>
            <consortium name="The MGC Project Team"/>
        </authorList>
    </citation>
    <scope>NUCLEOTIDE SEQUENCE [LARGE SCALE MRNA]</scope>
    <source>
        <strain>C57BL/6J</strain>
        <tissue>Brain</tissue>
    </source>
</reference>
<reference key="3">
    <citation type="journal article" date="1996" name="Biol. Reprod.">
        <title>A comprehensive survey of the cadherins expressed in the testes of fetal, immature, and adult mice utilizing the polymerase chain reaction.</title>
        <authorList>
            <person name="Munro S.B."/>
            <person name="Blaschuk O.W."/>
        </authorList>
    </citation>
    <scope>NUCLEOTIDE SEQUENCE [MRNA] OF 516-788</scope>
    <scope>DEVELOPMENTAL STAGE</scope>
    <source>
        <strain>C57BL/6J</strain>
        <tissue>Testis</tissue>
    </source>
</reference>
<reference key="4">
    <citation type="journal article" date="1996" name="Cell. Immunol.">
        <title>Characterization of cadherins expressed by murine thymocytes.</title>
        <authorList>
            <person name="Munro S.B."/>
            <person name="Duclos A.J."/>
            <person name="Jackson A.R."/>
            <person name="Baines M.G."/>
            <person name="Blaschuk O.W."/>
        </authorList>
    </citation>
    <scope>NUCLEOTIDE SEQUENCE [MRNA] OF 732-771</scope>
    <source>
        <strain>CBA/J</strain>
        <tissue>Thymocyte</tissue>
    </source>
</reference>
<reference key="5">
    <citation type="journal article" date="2006" name="Mol. Cell. Proteomics">
        <title>Comprehensive identification of phosphorylation sites in postsynaptic density preparations.</title>
        <authorList>
            <person name="Trinidad J.C."/>
            <person name="Specht C.G."/>
            <person name="Thalhammer A."/>
            <person name="Schoepfer R."/>
            <person name="Burlingame A.L."/>
        </authorList>
    </citation>
    <scope>PHOSPHORYLATION [LARGE SCALE ANALYSIS] AT SER-784</scope>
    <scope>IDENTIFICATION BY MASS SPECTROMETRY [LARGE SCALE ANALYSIS]</scope>
    <source>
        <tissue>Brain</tissue>
    </source>
</reference>
<reference key="6">
    <citation type="journal article" date="2010" name="Cell">
        <title>A tissue-specific atlas of mouse protein phosphorylation and expression.</title>
        <authorList>
            <person name="Huttlin E.L."/>
            <person name="Jedrychowski M.P."/>
            <person name="Elias J.E."/>
            <person name="Goswami T."/>
            <person name="Rad R."/>
            <person name="Beausoleil S.A."/>
            <person name="Villen J."/>
            <person name="Haas W."/>
            <person name="Sowa M.E."/>
            <person name="Gygi S.P."/>
        </authorList>
    </citation>
    <scope>PHOSPHORYLATION [LARGE SCALE ANALYSIS] AT SER-784</scope>
    <scope>IDENTIFICATION BY MASS SPECTROMETRY [LARGE SCALE ANALYSIS]</scope>
    <source>
        <tissue>Brain</tissue>
    </source>
</reference>
<evidence type="ECO:0000250" key="1"/>
<evidence type="ECO:0000255" key="2"/>
<evidence type="ECO:0000255" key="3">
    <source>
        <dbReference type="PROSITE-ProRule" id="PRU00043"/>
    </source>
</evidence>
<evidence type="ECO:0000269" key="4">
    <source>
    </source>
</evidence>
<evidence type="ECO:0000305" key="5"/>
<evidence type="ECO:0007744" key="6">
    <source>
    </source>
</evidence>
<evidence type="ECO:0007744" key="7">
    <source>
    </source>
</evidence>
<evidence type="ECO:0007829" key="8">
    <source>
        <dbReference type="PDB" id="6CG6"/>
    </source>
</evidence>